<organism>
    <name type="scientific">Photorhabdus laumondii subsp. laumondii (strain DSM 15139 / CIP 105565 / TT01)</name>
    <name type="common">Photorhabdus luminescens subsp. laumondii</name>
    <dbReference type="NCBI Taxonomy" id="243265"/>
    <lineage>
        <taxon>Bacteria</taxon>
        <taxon>Pseudomonadati</taxon>
        <taxon>Pseudomonadota</taxon>
        <taxon>Gammaproteobacteria</taxon>
        <taxon>Enterobacterales</taxon>
        <taxon>Morganellaceae</taxon>
        <taxon>Photorhabdus</taxon>
    </lineage>
</organism>
<keyword id="KW-0131">Cell cycle</keyword>
<keyword id="KW-0132">Cell division</keyword>
<keyword id="KW-0997">Cell inner membrane</keyword>
<keyword id="KW-1003">Cell membrane</keyword>
<keyword id="KW-0472">Membrane</keyword>
<keyword id="KW-1185">Reference proteome</keyword>
<keyword id="KW-0812">Transmembrane</keyword>
<keyword id="KW-1133">Transmembrane helix</keyword>
<dbReference type="EMBL" id="BX571863">
    <property type="protein sequence ID" value="CAE13690.1"/>
    <property type="molecule type" value="Genomic_DNA"/>
</dbReference>
<dbReference type="RefSeq" id="WP_011145705.1">
    <property type="nucleotide sequence ID" value="NC_005126.1"/>
</dbReference>
<dbReference type="SMR" id="Q7N6Y5"/>
<dbReference type="STRING" id="243265.plu1397"/>
<dbReference type="GeneID" id="48847676"/>
<dbReference type="KEGG" id="plu:plu1397"/>
<dbReference type="eggNOG" id="COG3115">
    <property type="taxonomic scope" value="Bacteria"/>
</dbReference>
<dbReference type="HOGENOM" id="CLU_030174_1_0_6"/>
<dbReference type="OrthoDB" id="7054914at2"/>
<dbReference type="Proteomes" id="UP000002514">
    <property type="component" value="Chromosome"/>
</dbReference>
<dbReference type="GO" id="GO:0032153">
    <property type="term" value="C:cell division site"/>
    <property type="evidence" value="ECO:0007669"/>
    <property type="project" value="UniProtKB-UniRule"/>
</dbReference>
<dbReference type="GO" id="GO:0005886">
    <property type="term" value="C:plasma membrane"/>
    <property type="evidence" value="ECO:0007669"/>
    <property type="project" value="UniProtKB-SubCell"/>
</dbReference>
<dbReference type="GO" id="GO:0000917">
    <property type="term" value="P:division septum assembly"/>
    <property type="evidence" value="ECO:0007669"/>
    <property type="project" value="TreeGrafter"/>
</dbReference>
<dbReference type="GO" id="GO:0043093">
    <property type="term" value="P:FtsZ-dependent cytokinesis"/>
    <property type="evidence" value="ECO:0007669"/>
    <property type="project" value="UniProtKB-UniRule"/>
</dbReference>
<dbReference type="CDD" id="cd00231">
    <property type="entry name" value="ZipA"/>
    <property type="match status" value="1"/>
</dbReference>
<dbReference type="FunFam" id="3.30.1400.10:FF:000001">
    <property type="entry name" value="Cell division protein ZipA"/>
    <property type="match status" value="1"/>
</dbReference>
<dbReference type="Gene3D" id="3.30.1400.10">
    <property type="entry name" value="ZipA, C-terminal FtsZ-binding domain"/>
    <property type="match status" value="1"/>
</dbReference>
<dbReference type="HAMAP" id="MF_00509">
    <property type="entry name" value="ZipA"/>
    <property type="match status" value="1"/>
</dbReference>
<dbReference type="InterPro" id="IPR011919">
    <property type="entry name" value="Cell_div_ZipA"/>
</dbReference>
<dbReference type="InterPro" id="IPR007449">
    <property type="entry name" value="ZipA_FtsZ-bd_C"/>
</dbReference>
<dbReference type="InterPro" id="IPR036765">
    <property type="entry name" value="ZipA_FtsZ-bd_C_sf"/>
</dbReference>
<dbReference type="NCBIfam" id="TIGR02205">
    <property type="entry name" value="septum_zipA"/>
    <property type="match status" value="1"/>
</dbReference>
<dbReference type="PANTHER" id="PTHR38685">
    <property type="entry name" value="CELL DIVISION PROTEIN ZIPA"/>
    <property type="match status" value="1"/>
</dbReference>
<dbReference type="PANTHER" id="PTHR38685:SF1">
    <property type="entry name" value="CELL DIVISION PROTEIN ZIPA"/>
    <property type="match status" value="1"/>
</dbReference>
<dbReference type="Pfam" id="PF04354">
    <property type="entry name" value="ZipA_C"/>
    <property type="match status" value="1"/>
</dbReference>
<dbReference type="SMART" id="SM00771">
    <property type="entry name" value="ZipA_C"/>
    <property type="match status" value="1"/>
</dbReference>
<dbReference type="SUPFAM" id="SSF64383">
    <property type="entry name" value="Cell-division protein ZipA, C-terminal domain"/>
    <property type="match status" value="1"/>
</dbReference>
<gene>
    <name evidence="1" type="primary">zipA</name>
    <name type="ordered locus">plu1397</name>
</gene>
<evidence type="ECO:0000255" key="1">
    <source>
        <dbReference type="HAMAP-Rule" id="MF_00509"/>
    </source>
</evidence>
<evidence type="ECO:0000256" key="2">
    <source>
        <dbReference type="SAM" id="MobiDB-lite"/>
    </source>
</evidence>
<reference key="1">
    <citation type="journal article" date="2003" name="Nat. Biotechnol.">
        <title>The genome sequence of the entomopathogenic bacterium Photorhabdus luminescens.</title>
        <authorList>
            <person name="Duchaud E."/>
            <person name="Rusniok C."/>
            <person name="Frangeul L."/>
            <person name="Buchrieser C."/>
            <person name="Givaudan A."/>
            <person name="Taourit S."/>
            <person name="Bocs S."/>
            <person name="Boursaux-Eude C."/>
            <person name="Chandler M."/>
            <person name="Charles J.-F."/>
            <person name="Dassa E."/>
            <person name="Derose R."/>
            <person name="Derzelle S."/>
            <person name="Freyssinet G."/>
            <person name="Gaudriault S."/>
            <person name="Medigue C."/>
            <person name="Lanois A."/>
            <person name="Powell K."/>
            <person name="Siguier P."/>
            <person name="Vincent R."/>
            <person name="Wingate V."/>
            <person name="Zouine M."/>
            <person name="Glaser P."/>
            <person name="Boemare N."/>
            <person name="Danchin A."/>
            <person name="Kunst F."/>
        </authorList>
    </citation>
    <scope>NUCLEOTIDE SEQUENCE [LARGE SCALE GENOMIC DNA]</scope>
    <source>
        <strain>DSM 15139 / CIP 105565 / TT01</strain>
    </source>
</reference>
<accession>Q7N6Y5</accession>
<proteinExistence type="inferred from homology"/>
<sequence length="303" mass="34115">MMQDLRLILIIVGAIAIIALLLHGLWTSRKERSSLFRDRPVKRHKHDRQNSFVDDSDDEAFDNQQKPYAHKQVKSHQEYKAEPAIERRQQKLTEIDAATPEESDDPLLTGRQPETTARRAAIEEQEPQLGLFEFEEQNESERNGSAIEEKSQEAAGEKEAQTKVKEIVLVLHVAAHHGQELNGESLLQSILQSGFQFGEMQIFHRHVNPSGSGPVLFSLANMVKPGSFNPETMVDFTTPGVSIFMMVPSYGESSQNFKLMLQAAQRIASDVGGVVLDDERKMLTPQKIELYKARIRSTLGVQV</sequence>
<comment type="function">
    <text evidence="1">Essential cell division protein that stabilizes the FtsZ protofilaments by cross-linking them and that serves as a cytoplasmic membrane anchor for the Z ring. Also required for the recruitment to the septal ring of downstream cell division proteins.</text>
</comment>
<comment type="subunit">
    <text evidence="1">Interacts with FtsZ via their C-terminal domains.</text>
</comment>
<comment type="subcellular location">
    <subcellularLocation>
        <location evidence="1">Cell inner membrane</location>
        <topology evidence="1">Single-pass type I membrane protein</topology>
    </subcellularLocation>
    <text evidence="1">Localizes to the Z ring in an FtsZ-dependent manner.</text>
</comment>
<comment type="similarity">
    <text evidence="1">Belongs to the ZipA family.</text>
</comment>
<name>ZIPA_PHOLL</name>
<protein>
    <recommendedName>
        <fullName evidence="1">Cell division protein ZipA</fullName>
    </recommendedName>
</protein>
<feature type="chain" id="PRO_0000214529" description="Cell division protein ZipA">
    <location>
        <begin position="1"/>
        <end position="303"/>
    </location>
</feature>
<feature type="topological domain" description="Periplasmic" evidence="1">
    <location>
        <begin position="1"/>
        <end position="6"/>
    </location>
</feature>
<feature type="transmembrane region" description="Helical" evidence="1">
    <location>
        <begin position="7"/>
        <end position="27"/>
    </location>
</feature>
<feature type="topological domain" description="Cytoplasmic" evidence="1">
    <location>
        <begin position="28"/>
        <end position="303"/>
    </location>
</feature>
<feature type="region of interest" description="Disordered" evidence="2">
    <location>
        <begin position="39"/>
        <end position="61"/>
    </location>
</feature>
<feature type="region of interest" description="Disordered" evidence="2">
    <location>
        <begin position="66"/>
        <end position="85"/>
    </location>
</feature>
<feature type="region of interest" description="Disordered" evidence="2">
    <location>
        <begin position="124"/>
        <end position="159"/>
    </location>
</feature>
<feature type="compositionally biased region" description="Basic and acidic residues" evidence="2">
    <location>
        <begin position="75"/>
        <end position="85"/>
    </location>
</feature>
<feature type="compositionally biased region" description="Basic and acidic residues" evidence="2">
    <location>
        <begin position="139"/>
        <end position="159"/>
    </location>
</feature>